<accession>Q6GE71</accession>
<protein>
    <recommendedName>
        <fullName>Uncharacterized HTH-type transcriptional regulator SAR2449</fullName>
    </recommendedName>
</protein>
<comment type="subcellular location">
    <subcellularLocation>
        <location evidence="2">Cytoplasm</location>
    </subcellularLocation>
</comment>
<keyword id="KW-0963">Cytoplasm</keyword>
<keyword id="KW-0238">DNA-binding</keyword>
<keyword id="KW-0804">Transcription</keyword>
<keyword id="KW-0805">Transcription regulation</keyword>
<name>Y2449_STAAR</name>
<feature type="chain" id="PRO_0000298602" description="Uncharacterized HTH-type transcriptional regulator SAR2449">
    <location>
        <begin position="1"/>
        <end position="147"/>
    </location>
</feature>
<feature type="domain" description="HTH LytTR-type" evidence="1">
    <location>
        <begin position="44"/>
        <end position="147"/>
    </location>
</feature>
<proteinExistence type="predicted"/>
<dbReference type="EMBL" id="BX571856">
    <property type="protein sequence ID" value="CAG41431.1"/>
    <property type="molecule type" value="Genomic_DNA"/>
</dbReference>
<dbReference type="RefSeq" id="WP_000977031.1">
    <property type="nucleotide sequence ID" value="NC_002952.2"/>
</dbReference>
<dbReference type="SMR" id="Q6GE71"/>
<dbReference type="KEGG" id="sar:SAR2449"/>
<dbReference type="HOGENOM" id="CLU_106729_4_0_9"/>
<dbReference type="Proteomes" id="UP000000596">
    <property type="component" value="Chromosome"/>
</dbReference>
<dbReference type="GO" id="GO:0005737">
    <property type="term" value="C:cytoplasm"/>
    <property type="evidence" value="ECO:0007669"/>
    <property type="project" value="UniProtKB-SubCell"/>
</dbReference>
<dbReference type="GO" id="GO:0003677">
    <property type="term" value="F:DNA binding"/>
    <property type="evidence" value="ECO:0007669"/>
    <property type="project" value="UniProtKB-KW"/>
</dbReference>
<dbReference type="GO" id="GO:0000156">
    <property type="term" value="F:phosphorelay response regulator activity"/>
    <property type="evidence" value="ECO:0007669"/>
    <property type="project" value="InterPro"/>
</dbReference>
<dbReference type="Gene3D" id="2.40.50.1020">
    <property type="entry name" value="LytTr DNA-binding domain"/>
    <property type="match status" value="1"/>
</dbReference>
<dbReference type="InterPro" id="IPR046947">
    <property type="entry name" value="LytR-like"/>
</dbReference>
<dbReference type="InterPro" id="IPR007492">
    <property type="entry name" value="LytTR_DNA-bd_dom"/>
</dbReference>
<dbReference type="PANTHER" id="PTHR37299:SF2">
    <property type="entry name" value="HTH LYTTR-TYPE DOMAIN-CONTAINING PROTEIN"/>
    <property type="match status" value="1"/>
</dbReference>
<dbReference type="PANTHER" id="PTHR37299">
    <property type="entry name" value="TRANSCRIPTIONAL REGULATOR-RELATED"/>
    <property type="match status" value="1"/>
</dbReference>
<dbReference type="Pfam" id="PF04397">
    <property type="entry name" value="LytTR"/>
    <property type="match status" value="1"/>
</dbReference>
<dbReference type="SMART" id="SM00850">
    <property type="entry name" value="LytTR"/>
    <property type="match status" value="1"/>
</dbReference>
<dbReference type="PROSITE" id="PS50930">
    <property type="entry name" value="HTH_LYTTR"/>
    <property type="match status" value="1"/>
</dbReference>
<organism>
    <name type="scientific">Staphylococcus aureus (strain MRSA252)</name>
    <dbReference type="NCBI Taxonomy" id="282458"/>
    <lineage>
        <taxon>Bacteria</taxon>
        <taxon>Bacillati</taxon>
        <taxon>Bacillota</taxon>
        <taxon>Bacilli</taxon>
        <taxon>Bacillales</taxon>
        <taxon>Staphylococcaceae</taxon>
        <taxon>Staphylococcus</taxon>
    </lineage>
</organism>
<evidence type="ECO:0000255" key="1">
    <source>
        <dbReference type="PROSITE-ProRule" id="PRU00112"/>
    </source>
</evidence>
<evidence type="ECO:0000305" key="2"/>
<gene>
    <name type="ordered locus">SAR2449</name>
</gene>
<sequence length="147" mass="17323">MMKLNLFINANETESYIDIHAPKMNDHVQSIINAVNDLDKSHTLVGYIDKEIHIINVSDVITFQVINKNVTAITSNQKFKLKLRLYELEKQLPQHFIRISKSEIVNKYYIEKLLLEPNGLIRMYLKDAHYTYSSRRFLKSIKERLSI</sequence>
<reference key="1">
    <citation type="journal article" date="2004" name="Proc. Natl. Acad. Sci. U.S.A.">
        <title>Complete genomes of two clinical Staphylococcus aureus strains: evidence for the rapid evolution of virulence and drug resistance.</title>
        <authorList>
            <person name="Holden M.T.G."/>
            <person name="Feil E.J."/>
            <person name="Lindsay J.A."/>
            <person name="Peacock S.J."/>
            <person name="Day N.P.J."/>
            <person name="Enright M.C."/>
            <person name="Foster T.J."/>
            <person name="Moore C.E."/>
            <person name="Hurst L."/>
            <person name="Atkin R."/>
            <person name="Barron A."/>
            <person name="Bason N."/>
            <person name="Bentley S.D."/>
            <person name="Chillingworth C."/>
            <person name="Chillingworth T."/>
            <person name="Churcher C."/>
            <person name="Clark L."/>
            <person name="Corton C."/>
            <person name="Cronin A."/>
            <person name="Doggett J."/>
            <person name="Dowd L."/>
            <person name="Feltwell T."/>
            <person name="Hance Z."/>
            <person name="Harris B."/>
            <person name="Hauser H."/>
            <person name="Holroyd S."/>
            <person name="Jagels K."/>
            <person name="James K.D."/>
            <person name="Lennard N."/>
            <person name="Line A."/>
            <person name="Mayes R."/>
            <person name="Moule S."/>
            <person name="Mungall K."/>
            <person name="Ormond D."/>
            <person name="Quail M.A."/>
            <person name="Rabbinowitsch E."/>
            <person name="Rutherford K.M."/>
            <person name="Sanders M."/>
            <person name="Sharp S."/>
            <person name="Simmonds M."/>
            <person name="Stevens K."/>
            <person name="Whitehead S."/>
            <person name="Barrell B.G."/>
            <person name="Spratt B.G."/>
            <person name="Parkhill J."/>
        </authorList>
    </citation>
    <scope>NUCLEOTIDE SEQUENCE [LARGE SCALE GENOMIC DNA]</scope>
    <source>
        <strain>MRSA252</strain>
    </source>
</reference>